<evidence type="ECO:0000255" key="1">
    <source>
        <dbReference type="HAMAP-Rule" id="MF_00361"/>
    </source>
</evidence>
<evidence type="ECO:0000256" key="2">
    <source>
        <dbReference type="SAM" id="MobiDB-lite"/>
    </source>
</evidence>
<protein>
    <recommendedName>
        <fullName evidence="1">NAD kinase</fullName>
        <ecNumber evidence="1">2.7.1.23</ecNumber>
    </recommendedName>
    <alternativeName>
        <fullName evidence="1">ATP-dependent NAD kinase</fullName>
    </alternativeName>
</protein>
<proteinExistence type="inferred from homology"/>
<accession>B7GTM7</accession>
<accession>E8MLT0</accession>
<gene>
    <name evidence="1" type="primary">nadK</name>
    <name type="ordered locus">Blon_1862</name>
    <name type="ordered locus">BLIJ_1928</name>
</gene>
<organism>
    <name type="scientific">Bifidobacterium longum subsp. infantis (strain ATCC 15697 / DSM 20088 / JCM 1222 / NCTC 11817 / S12)</name>
    <dbReference type="NCBI Taxonomy" id="391904"/>
    <lineage>
        <taxon>Bacteria</taxon>
        <taxon>Bacillati</taxon>
        <taxon>Actinomycetota</taxon>
        <taxon>Actinomycetes</taxon>
        <taxon>Bifidobacteriales</taxon>
        <taxon>Bifidobacteriaceae</taxon>
        <taxon>Bifidobacterium</taxon>
    </lineage>
</organism>
<name>NADK_BIFLS</name>
<keyword id="KW-0067">ATP-binding</keyword>
<keyword id="KW-0963">Cytoplasm</keyword>
<keyword id="KW-0418">Kinase</keyword>
<keyword id="KW-0520">NAD</keyword>
<keyword id="KW-0521">NADP</keyword>
<keyword id="KW-0547">Nucleotide-binding</keyword>
<keyword id="KW-0808">Transferase</keyword>
<feature type="chain" id="PRO_1000133558" description="NAD kinase">
    <location>
        <begin position="1"/>
        <end position="338"/>
    </location>
</feature>
<feature type="region of interest" description="Disordered" evidence="2">
    <location>
        <begin position="317"/>
        <end position="338"/>
    </location>
</feature>
<feature type="compositionally biased region" description="Basic and acidic residues" evidence="2">
    <location>
        <begin position="325"/>
        <end position="338"/>
    </location>
</feature>
<feature type="active site" description="Proton acceptor" evidence="1">
    <location>
        <position position="66"/>
    </location>
</feature>
<feature type="binding site" evidence="1">
    <location>
        <begin position="66"/>
        <end position="67"/>
    </location>
    <ligand>
        <name>NAD(+)</name>
        <dbReference type="ChEBI" id="CHEBI:57540"/>
    </ligand>
</feature>
<feature type="binding site" evidence="1">
    <location>
        <position position="71"/>
    </location>
    <ligand>
        <name>NAD(+)</name>
        <dbReference type="ChEBI" id="CHEBI:57540"/>
    </ligand>
</feature>
<feature type="binding site" evidence="1">
    <location>
        <begin position="141"/>
        <end position="142"/>
    </location>
    <ligand>
        <name>NAD(+)</name>
        <dbReference type="ChEBI" id="CHEBI:57540"/>
    </ligand>
</feature>
<feature type="binding site" evidence="1">
    <location>
        <position position="152"/>
    </location>
    <ligand>
        <name>NAD(+)</name>
        <dbReference type="ChEBI" id="CHEBI:57540"/>
    </ligand>
</feature>
<feature type="binding site" evidence="1">
    <location>
        <position position="171"/>
    </location>
    <ligand>
        <name>NAD(+)</name>
        <dbReference type="ChEBI" id="CHEBI:57540"/>
    </ligand>
</feature>
<feature type="binding site" evidence="1">
    <location>
        <begin position="182"/>
        <end position="187"/>
    </location>
    <ligand>
        <name>NAD(+)</name>
        <dbReference type="ChEBI" id="CHEBI:57540"/>
    </ligand>
</feature>
<feature type="binding site" evidence="1">
    <location>
        <position position="206"/>
    </location>
    <ligand>
        <name>NAD(+)</name>
        <dbReference type="ChEBI" id="CHEBI:57540"/>
    </ligand>
</feature>
<comment type="function">
    <text evidence="1">Involved in the regulation of the intracellular balance of NAD and NADP, and is a key enzyme in the biosynthesis of NADP. Catalyzes specifically the phosphorylation on 2'-hydroxyl of the adenosine moiety of NAD to yield NADP.</text>
</comment>
<comment type="catalytic activity">
    <reaction evidence="1">
        <text>NAD(+) + ATP = ADP + NADP(+) + H(+)</text>
        <dbReference type="Rhea" id="RHEA:18629"/>
        <dbReference type="ChEBI" id="CHEBI:15378"/>
        <dbReference type="ChEBI" id="CHEBI:30616"/>
        <dbReference type="ChEBI" id="CHEBI:57540"/>
        <dbReference type="ChEBI" id="CHEBI:58349"/>
        <dbReference type="ChEBI" id="CHEBI:456216"/>
        <dbReference type="EC" id="2.7.1.23"/>
    </reaction>
</comment>
<comment type="cofactor">
    <cofactor evidence="1">
        <name>a divalent metal cation</name>
        <dbReference type="ChEBI" id="CHEBI:60240"/>
    </cofactor>
</comment>
<comment type="subcellular location">
    <subcellularLocation>
        <location evidence="1">Cytoplasm</location>
    </subcellularLocation>
</comment>
<comment type="similarity">
    <text evidence="1">Belongs to the NAD kinase family.</text>
</comment>
<reference key="1">
    <citation type="journal article" date="2008" name="Proc. Natl. Acad. Sci. U.S.A.">
        <title>The genome sequence of Bifidobacterium longum subsp. infantis reveals adaptations for milk utilization within the infant microbiome.</title>
        <authorList>
            <person name="Sela D.A."/>
            <person name="Chapman J."/>
            <person name="Adeuya A."/>
            <person name="Kim J.H."/>
            <person name="Chen F."/>
            <person name="Whitehead T.R."/>
            <person name="Lapidus A."/>
            <person name="Rokhsar D.S."/>
            <person name="Lebrilla C.B."/>
            <person name="German J.B."/>
            <person name="Price N.P."/>
            <person name="Richardson P.M."/>
            <person name="Mills D.A."/>
        </authorList>
    </citation>
    <scope>NUCLEOTIDE SEQUENCE [LARGE SCALE GENOMIC DNA]</scope>
    <source>
        <strain>ATCC 15697 / DSM 20088 / JCM 1222 / NCTC 11817 / S12</strain>
    </source>
</reference>
<reference key="2">
    <citation type="journal article" date="2011" name="Nature">
        <title>Bifidobacteria can protect from enteropathogenic infection through production of acetate.</title>
        <authorList>
            <person name="Fukuda S."/>
            <person name="Toh H."/>
            <person name="Hase K."/>
            <person name="Oshima K."/>
            <person name="Nakanishi Y."/>
            <person name="Yoshimura K."/>
            <person name="Tobe T."/>
            <person name="Clarke J.M."/>
            <person name="Topping D.L."/>
            <person name="Suzuki T."/>
            <person name="Taylor T.D."/>
            <person name="Itoh K."/>
            <person name="Kikuchi J."/>
            <person name="Morita H."/>
            <person name="Hattori M."/>
            <person name="Ohno H."/>
        </authorList>
    </citation>
    <scope>NUCLEOTIDE SEQUENCE [LARGE SCALE GENOMIC DNA]</scope>
    <source>
        <strain>ATCC 15697 / DSM 20088 / JCM 1222 / NCTC 11817 / S12</strain>
    </source>
</reference>
<dbReference type="EC" id="2.7.1.23" evidence="1"/>
<dbReference type="EMBL" id="CP001095">
    <property type="protein sequence ID" value="ACJ52936.1"/>
    <property type="molecule type" value="Genomic_DNA"/>
</dbReference>
<dbReference type="EMBL" id="AP010889">
    <property type="protein sequence ID" value="BAJ69507.1"/>
    <property type="molecule type" value="Genomic_DNA"/>
</dbReference>
<dbReference type="RefSeq" id="WP_012578151.1">
    <property type="nucleotide sequence ID" value="NC_011593.1"/>
</dbReference>
<dbReference type="SMR" id="B7GTM7"/>
<dbReference type="KEGG" id="bln:Blon_1862"/>
<dbReference type="KEGG" id="blon:BLIJ_1928"/>
<dbReference type="PATRIC" id="fig|391904.8.peg.1932"/>
<dbReference type="HOGENOM" id="CLU_008831_0_0_11"/>
<dbReference type="Proteomes" id="UP000001360">
    <property type="component" value="Chromosome"/>
</dbReference>
<dbReference type="GO" id="GO:0005737">
    <property type="term" value="C:cytoplasm"/>
    <property type="evidence" value="ECO:0007669"/>
    <property type="project" value="UniProtKB-SubCell"/>
</dbReference>
<dbReference type="GO" id="GO:0005524">
    <property type="term" value="F:ATP binding"/>
    <property type="evidence" value="ECO:0007669"/>
    <property type="project" value="UniProtKB-KW"/>
</dbReference>
<dbReference type="GO" id="GO:0046872">
    <property type="term" value="F:metal ion binding"/>
    <property type="evidence" value="ECO:0007669"/>
    <property type="project" value="UniProtKB-UniRule"/>
</dbReference>
<dbReference type="GO" id="GO:0051287">
    <property type="term" value="F:NAD binding"/>
    <property type="evidence" value="ECO:0007669"/>
    <property type="project" value="UniProtKB-ARBA"/>
</dbReference>
<dbReference type="GO" id="GO:0003951">
    <property type="term" value="F:NAD+ kinase activity"/>
    <property type="evidence" value="ECO:0007669"/>
    <property type="project" value="UniProtKB-UniRule"/>
</dbReference>
<dbReference type="GO" id="GO:0019674">
    <property type="term" value="P:NAD metabolic process"/>
    <property type="evidence" value="ECO:0007669"/>
    <property type="project" value="InterPro"/>
</dbReference>
<dbReference type="GO" id="GO:0006741">
    <property type="term" value="P:NADP biosynthetic process"/>
    <property type="evidence" value="ECO:0007669"/>
    <property type="project" value="UniProtKB-UniRule"/>
</dbReference>
<dbReference type="Gene3D" id="3.40.50.10330">
    <property type="entry name" value="Probable inorganic polyphosphate/atp-NAD kinase, domain 1"/>
    <property type="match status" value="1"/>
</dbReference>
<dbReference type="Gene3D" id="2.60.200.30">
    <property type="entry name" value="Probable inorganic polyphosphate/atp-NAD kinase, domain 2"/>
    <property type="match status" value="1"/>
</dbReference>
<dbReference type="HAMAP" id="MF_00361">
    <property type="entry name" value="NAD_kinase"/>
    <property type="match status" value="1"/>
</dbReference>
<dbReference type="InterPro" id="IPR017438">
    <property type="entry name" value="ATP-NAD_kinase_N"/>
</dbReference>
<dbReference type="InterPro" id="IPR017437">
    <property type="entry name" value="ATP-NAD_kinase_PpnK-typ_C"/>
</dbReference>
<dbReference type="InterPro" id="IPR016064">
    <property type="entry name" value="NAD/diacylglycerol_kinase_sf"/>
</dbReference>
<dbReference type="InterPro" id="IPR002504">
    <property type="entry name" value="NADK"/>
</dbReference>
<dbReference type="NCBIfam" id="NF002892">
    <property type="entry name" value="PRK03372.1"/>
    <property type="match status" value="1"/>
</dbReference>
<dbReference type="PANTHER" id="PTHR20275">
    <property type="entry name" value="NAD KINASE"/>
    <property type="match status" value="1"/>
</dbReference>
<dbReference type="PANTHER" id="PTHR20275:SF0">
    <property type="entry name" value="NAD KINASE"/>
    <property type="match status" value="1"/>
</dbReference>
<dbReference type="Pfam" id="PF01513">
    <property type="entry name" value="NAD_kinase"/>
    <property type="match status" value="1"/>
</dbReference>
<dbReference type="Pfam" id="PF20143">
    <property type="entry name" value="NAD_kinase_C"/>
    <property type="match status" value="1"/>
</dbReference>
<dbReference type="SUPFAM" id="SSF111331">
    <property type="entry name" value="NAD kinase/diacylglycerol kinase-like"/>
    <property type="match status" value="1"/>
</dbReference>
<sequence length="338" mass="36342">MAKRNAVVVTHTRLRQTGTVVAEAVSQLRVAGFEVTIIDNTEAPDFGVQPPCVSDDTEIVVVLGGDGTILRAAELVHCTQVPILGVNMGHVGFLAEFESFQIDEAIRRVATHDYSIDERMIAHVDVWLPGATKPIEDWALNDITLERADRGKMVELSIRVDDVEMNSFGADGVIVSTPTGSTAYAFSAGGPVMWPNVKALQLIPLAAHALFARPLIIGSGSTFTIDILDDSMSEGWICCDGRRQRALPQGTRVMVRESRDTLRLARLSGMPFTNRLVSKFDLPVVGWREHARNEASSQPLHHGHTFPAAAYAAGVAGDAGVAGTEPDKPGERDGKAGA</sequence>